<dbReference type="EMBL" id="X89633">
    <property type="protein sequence ID" value="CAA61792.1"/>
    <property type="molecule type" value="Genomic_DNA"/>
</dbReference>
<dbReference type="EMBL" id="Z75197">
    <property type="protein sequence ID" value="CAA99516.1"/>
    <property type="molecule type" value="Genomic_DNA"/>
</dbReference>
<dbReference type="EMBL" id="BK006948">
    <property type="protein sequence ID" value="DAA11053.1"/>
    <property type="molecule type" value="Genomic_DNA"/>
</dbReference>
<dbReference type="PIR" id="S67191">
    <property type="entry name" value="S67191"/>
</dbReference>
<dbReference type="RefSeq" id="NP_014932.1">
    <property type="nucleotide sequence ID" value="NM_001183708.1"/>
</dbReference>
<dbReference type="SMR" id="Q12012"/>
<dbReference type="BioGRID" id="34676">
    <property type="interactions" value="46"/>
</dbReference>
<dbReference type="DIP" id="DIP-4455N"/>
<dbReference type="FunCoup" id="Q12012">
    <property type="interactions" value="1313"/>
</dbReference>
<dbReference type="IntAct" id="Q12012">
    <property type="interactions" value="1"/>
</dbReference>
<dbReference type="MINT" id="Q12012"/>
<dbReference type="STRING" id="4932.YOR289W"/>
<dbReference type="iPTMnet" id="Q12012"/>
<dbReference type="PaxDb" id="4932-YOR289W"/>
<dbReference type="PeptideAtlas" id="Q12012"/>
<dbReference type="EnsemblFungi" id="YOR289W_mRNA">
    <property type="protein sequence ID" value="YOR289W"/>
    <property type="gene ID" value="YOR289W"/>
</dbReference>
<dbReference type="GeneID" id="854463"/>
<dbReference type="KEGG" id="sce:YOR289W"/>
<dbReference type="AGR" id="SGD:S000005815"/>
<dbReference type="SGD" id="S000005815">
    <property type="gene designation" value="YOR289W"/>
</dbReference>
<dbReference type="VEuPathDB" id="FungiDB:YOR289W"/>
<dbReference type="eggNOG" id="KOG3274">
    <property type="taxonomic scope" value="Eukaryota"/>
</dbReference>
<dbReference type="GeneTree" id="ENSGT00390000010397"/>
<dbReference type="HOGENOM" id="CLU_052828_3_0_1"/>
<dbReference type="InParanoid" id="Q12012"/>
<dbReference type="OMA" id="LFITWNK"/>
<dbReference type="OrthoDB" id="24630at2759"/>
<dbReference type="BioCyc" id="YEAST:G3O-33774-MONOMER"/>
<dbReference type="BioGRID-ORCS" id="854463">
    <property type="hits" value="1 hit in 10 CRISPR screens"/>
</dbReference>
<dbReference type="PRO" id="PR:Q12012"/>
<dbReference type="Proteomes" id="UP000002311">
    <property type="component" value="Chromosome XV"/>
</dbReference>
<dbReference type="RNAct" id="Q12012">
    <property type="molecule type" value="protein"/>
</dbReference>
<dbReference type="GO" id="GO:0005737">
    <property type="term" value="C:cytoplasm"/>
    <property type="evidence" value="ECO:0007005"/>
    <property type="project" value="SGD"/>
</dbReference>
<dbReference type="GO" id="GO:0005634">
    <property type="term" value="C:nucleus"/>
    <property type="evidence" value="ECO:0007005"/>
    <property type="project" value="SGD"/>
</dbReference>
<dbReference type="FunFam" id="3.30.1490.150:FF:000002">
    <property type="entry name" value="YOR289W-like protein"/>
    <property type="match status" value="1"/>
</dbReference>
<dbReference type="Gene3D" id="3.30.700.20">
    <property type="entry name" value="Hypothetical protein ph0010, domain 1"/>
    <property type="match status" value="1"/>
</dbReference>
<dbReference type="Gene3D" id="3.30.1490.150">
    <property type="entry name" value="Hypothetical protein ph0010, domain 2"/>
    <property type="match status" value="1"/>
</dbReference>
<dbReference type="InterPro" id="IPR023473">
    <property type="entry name" value="AMMECR1"/>
</dbReference>
<dbReference type="InterPro" id="IPR036071">
    <property type="entry name" value="AMMECR1_dom_sf"/>
</dbReference>
<dbReference type="InterPro" id="IPR002733">
    <property type="entry name" value="AMMECR1_domain"/>
</dbReference>
<dbReference type="InterPro" id="IPR027485">
    <property type="entry name" value="AMMECR1_N"/>
</dbReference>
<dbReference type="NCBIfam" id="TIGR00296">
    <property type="entry name" value="TIGR00296 family protein"/>
    <property type="match status" value="1"/>
</dbReference>
<dbReference type="PANTHER" id="PTHR13016:SF0">
    <property type="entry name" value="AMME SYNDROME CANDIDATE GENE 1 PROTEIN"/>
    <property type="match status" value="1"/>
</dbReference>
<dbReference type="PANTHER" id="PTHR13016">
    <property type="entry name" value="AMMECR1 HOMOLOG"/>
    <property type="match status" value="1"/>
</dbReference>
<dbReference type="Pfam" id="PF01871">
    <property type="entry name" value="AMMECR1"/>
    <property type="match status" value="1"/>
</dbReference>
<dbReference type="SUPFAM" id="SSF143447">
    <property type="entry name" value="AMMECR1-like"/>
    <property type="match status" value="1"/>
</dbReference>
<dbReference type="PROSITE" id="PS51112">
    <property type="entry name" value="AMMECR1"/>
    <property type="match status" value="1"/>
</dbReference>
<name>YO289_YEAST</name>
<sequence length="251" mass="29099">MALRLFRKSSFFAKISMEGPKGSSPFAFYAFYQLYSHLNPGKSSSLSLEDIRRRLYPDFKIDYNEKTSLFITWKKKSNKHHTIDTNEENYILRGCIGTFAKMPIAHGIEKYSLIAALEDRRFSPIQKRELVDLKCSCNILGNFKTIFRGGGNPNGDIFDWELGKHGIELYFKHPKTGTTCSATFLPDVMPEQHWNKEDTFANLIEKAGYWGNISEVMDNFETYFIEVIRYEGKKSSITYEEFNKQLKDIEA</sequence>
<comment type="miscellaneous">
    <text evidence="2">Present with 1710 molecules/cell in log phase SD medium.</text>
</comment>
<gene>
    <name type="ordered locus">YOR289W</name>
</gene>
<organism>
    <name type="scientific">Saccharomyces cerevisiae (strain ATCC 204508 / S288c)</name>
    <name type="common">Baker's yeast</name>
    <dbReference type="NCBI Taxonomy" id="559292"/>
    <lineage>
        <taxon>Eukaryota</taxon>
        <taxon>Fungi</taxon>
        <taxon>Dikarya</taxon>
        <taxon>Ascomycota</taxon>
        <taxon>Saccharomycotina</taxon>
        <taxon>Saccharomycetes</taxon>
        <taxon>Saccharomycetales</taxon>
        <taxon>Saccharomycetaceae</taxon>
        <taxon>Saccharomyces</taxon>
    </lineage>
</organism>
<protein>
    <recommendedName>
        <fullName>Uncharacterized protein YOR289W</fullName>
    </recommendedName>
</protein>
<accession>Q12012</accession>
<accession>D6W2Y7</accession>
<feature type="chain" id="PRO_0000142373" description="Uncharacterized protein YOR289W">
    <location>
        <begin position="1"/>
        <end position="251"/>
    </location>
</feature>
<feature type="domain" description="AMMECR1" evidence="1">
    <location>
        <begin position="21"/>
        <end position="246"/>
    </location>
</feature>
<keyword id="KW-1185">Reference proteome</keyword>
<evidence type="ECO:0000255" key="1">
    <source>
        <dbReference type="PROSITE-ProRule" id="PRU00467"/>
    </source>
</evidence>
<evidence type="ECO:0000269" key="2">
    <source>
    </source>
</evidence>
<reference key="1">
    <citation type="journal article" date="1996" name="Yeast">
        <title>DNA sequence analysis of the VPH1-SNF2 region on chromosome XV of Saccharomyces cerevisiae.</title>
        <authorList>
            <person name="Cheret G."/>
            <person name="Bernardi A."/>
            <person name="Sor F.J."/>
        </authorList>
    </citation>
    <scope>NUCLEOTIDE SEQUENCE [GENOMIC DNA]</scope>
    <source>
        <strain>ATCC 204508 / S288c</strain>
    </source>
</reference>
<reference key="2">
    <citation type="journal article" date="1997" name="Nature">
        <title>The nucleotide sequence of Saccharomyces cerevisiae chromosome XV.</title>
        <authorList>
            <person name="Dujon B."/>
            <person name="Albermann K."/>
            <person name="Aldea M."/>
            <person name="Alexandraki D."/>
            <person name="Ansorge W."/>
            <person name="Arino J."/>
            <person name="Benes V."/>
            <person name="Bohn C."/>
            <person name="Bolotin-Fukuhara M."/>
            <person name="Bordonne R."/>
            <person name="Boyer J."/>
            <person name="Camasses A."/>
            <person name="Casamayor A."/>
            <person name="Casas C."/>
            <person name="Cheret G."/>
            <person name="Cziepluch C."/>
            <person name="Daignan-Fornier B."/>
            <person name="Dang V.-D."/>
            <person name="de Haan M."/>
            <person name="Delius H."/>
            <person name="Durand P."/>
            <person name="Fairhead C."/>
            <person name="Feldmann H."/>
            <person name="Gaillon L."/>
            <person name="Galisson F."/>
            <person name="Gamo F.-J."/>
            <person name="Gancedo C."/>
            <person name="Goffeau A."/>
            <person name="Goulding S.E."/>
            <person name="Grivell L.A."/>
            <person name="Habbig B."/>
            <person name="Hand N.J."/>
            <person name="Hani J."/>
            <person name="Hattenhorst U."/>
            <person name="Hebling U."/>
            <person name="Hernando Y."/>
            <person name="Herrero E."/>
            <person name="Heumann K."/>
            <person name="Hiesel R."/>
            <person name="Hilger F."/>
            <person name="Hofmann B."/>
            <person name="Hollenberg C.P."/>
            <person name="Hughes B."/>
            <person name="Jauniaux J.-C."/>
            <person name="Kalogeropoulos A."/>
            <person name="Katsoulou C."/>
            <person name="Kordes E."/>
            <person name="Lafuente M.J."/>
            <person name="Landt O."/>
            <person name="Louis E.J."/>
            <person name="Maarse A.C."/>
            <person name="Madania A."/>
            <person name="Mannhaupt G."/>
            <person name="Marck C."/>
            <person name="Martin R.P."/>
            <person name="Mewes H.-W."/>
            <person name="Michaux G."/>
            <person name="Paces V."/>
            <person name="Parle-McDermott A.G."/>
            <person name="Pearson B.M."/>
            <person name="Perrin A."/>
            <person name="Pettersson B."/>
            <person name="Poch O."/>
            <person name="Pohl T.M."/>
            <person name="Poirey R."/>
            <person name="Portetelle D."/>
            <person name="Pujol A."/>
            <person name="Purnelle B."/>
            <person name="Ramezani Rad M."/>
            <person name="Rechmann S."/>
            <person name="Schwager C."/>
            <person name="Schweizer M."/>
            <person name="Sor F."/>
            <person name="Sterky F."/>
            <person name="Tarassov I.A."/>
            <person name="Teodoru C."/>
            <person name="Tettelin H."/>
            <person name="Thierry A."/>
            <person name="Tobiasch E."/>
            <person name="Tzermia M."/>
            <person name="Uhlen M."/>
            <person name="Unseld M."/>
            <person name="Valens M."/>
            <person name="Vandenbol M."/>
            <person name="Vetter I."/>
            <person name="Vlcek C."/>
            <person name="Voet M."/>
            <person name="Volckaert G."/>
            <person name="Voss H."/>
            <person name="Wambutt R."/>
            <person name="Wedler H."/>
            <person name="Wiemann S."/>
            <person name="Winsor B."/>
            <person name="Wolfe K.H."/>
            <person name="Zollner A."/>
            <person name="Zumstein E."/>
            <person name="Kleine K."/>
        </authorList>
    </citation>
    <scope>NUCLEOTIDE SEQUENCE [LARGE SCALE GENOMIC DNA]</scope>
    <source>
        <strain>ATCC 204508 / S288c</strain>
    </source>
</reference>
<reference key="3">
    <citation type="journal article" date="2014" name="G3 (Bethesda)">
        <title>The reference genome sequence of Saccharomyces cerevisiae: Then and now.</title>
        <authorList>
            <person name="Engel S.R."/>
            <person name="Dietrich F.S."/>
            <person name="Fisk D.G."/>
            <person name="Binkley G."/>
            <person name="Balakrishnan R."/>
            <person name="Costanzo M.C."/>
            <person name="Dwight S.S."/>
            <person name="Hitz B.C."/>
            <person name="Karra K."/>
            <person name="Nash R.S."/>
            <person name="Weng S."/>
            <person name="Wong E.D."/>
            <person name="Lloyd P."/>
            <person name="Skrzypek M.S."/>
            <person name="Miyasato S.R."/>
            <person name="Simison M."/>
            <person name="Cherry J.M."/>
        </authorList>
    </citation>
    <scope>GENOME REANNOTATION</scope>
    <source>
        <strain>ATCC 204508 / S288c</strain>
    </source>
</reference>
<reference key="4">
    <citation type="journal article" date="2003" name="Nature">
        <title>Global analysis of protein expression in yeast.</title>
        <authorList>
            <person name="Ghaemmaghami S."/>
            <person name="Huh W.-K."/>
            <person name="Bower K."/>
            <person name="Howson R.W."/>
            <person name="Belle A."/>
            <person name="Dephoure N."/>
            <person name="O'Shea E.K."/>
            <person name="Weissman J.S."/>
        </authorList>
    </citation>
    <scope>LEVEL OF PROTEIN EXPRESSION [LARGE SCALE ANALYSIS]</scope>
</reference>
<proteinExistence type="evidence at protein level"/>